<feature type="chain" id="PRO_1000009068" description="Phosphoheptose isomerase">
    <location>
        <begin position="1"/>
        <end position="194"/>
    </location>
</feature>
<feature type="domain" description="SIS" evidence="1">
    <location>
        <begin position="37"/>
        <end position="194"/>
    </location>
</feature>
<feature type="binding site" evidence="1">
    <location>
        <begin position="52"/>
        <end position="54"/>
    </location>
    <ligand>
        <name>substrate</name>
    </ligand>
</feature>
<feature type="binding site" evidence="1">
    <location>
        <position position="61"/>
    </location>
    <ligand>
        <name>Zn(2+)</name>
        <dbReference type="ChEBI" id="CHEBI:29105"/>
    </ligand>
</feature>
<feature type="binding site" evidence="1">
    <location>
        <position position="65"/>
    </location>
    <ligand>
        <name>substrate</name>
    </ligand>
</feature>
<feature type="binding site" evidence="1">
    <location>
        <position position="65"/>
    </location>
    <ligand>
        <name>Zn(2+)</name>
        <dbReference type="ChEBI" id="CHEBI:29105"/>
    </ligand>
</feature>
<feature type="binding site" evidence="1">
    <location>
        <begin position="93"/>
        <end position="94"/>
    </location>
    <ligand>
        <name>substrate</name>
    </ligand>
</feature>
<feature type="binding site" evidence="1">
    <location>
        <begin position="119"/>
        <end position="121"/>
    </location>
    <ligand>
        <name>substrate</name>
    </ligand>
</feature>
<feature type="binding site" evidence="1">
    <location>
        <position position="124"/>
    </location>
    <ligand>
        <name>substrate</name>
    </ligand>
</feature>
<feature type="binding site" evidence="1">
    <location>
        <position position="172"/>
    </location>
    <ligand>
        <name>substrate</name>
    </ligand>
</feature>
<feature type="binding site" evidence="1">
    <location>
        <position position="172"/>
    </location>
    <ligand>
        <name>Zn(2+)</name>
        <dbReference type="ChEBI" id="CHEBI:29105"/>
    </ligand>
</feature>
<feature type="binding site" evidence="1">
    <location>
        <position position="180"/>
    </location>
    <ligand>
        <name>Zn(2+)</name>
        <dbReference type="ChEBI" id="CHEBI:29105"/>
    </ligand>
</feature>
<organism>
    <name type="scientific">Haemophilus influenzae (strain 86-028NP)</name>
    <dbReference type="NCBI Taxonomy" id="281310"/>
    <lineage>
        <taxon>Bacteria</taxon>
        <taxon>Pseudomonadati</taxon>
        <taxon>Pseudomonadota</taxon>
        <taxon>Gammaproteobacteria</taxon>
        <taxon>Pasteurellales</taxon>
        <taxon>Pasteurellaceae</taxon>
        <taxon>Haemophilus</taxon>
    </lineage>
</organism>
<comment type="function">
    <text evidence="1">Catalyzes the isomerization of sedoheptulose 7-phosphate in D-glycero-D-manno-heptose 7-phosphate.</text>
</comment>
<comment type="catalytic activity">
    <reaction evidence="1">
        <text>2 D-sedoheptulose 7-phosphate = D-glycero-alpha-D-manno-heptose 7-phosphate + D-glycero-beta-D-manno-heptose 7-phosphate</text>
        <dbReference type="Rhea" id="RHEA:27489"/>
        <dbReference type="ChEBI" id="CHEBI:57483"/>
        <dbReference type="ChEBI" id="CHEBI:60203"/>
        <dbReference type="ChEBI" id="CHEBI:60204"/>
        <dbReference type="EC" id="5.3.1.28"/>
    </reaction>
</comment>
<comment type="cofactor">
    <cofactor evidence="1">
        <name>Zn(2+)</name>
        <dbReference type="ChEBI" id="CHEBI:29105"/>
    </cofactor>
    <text evidence="1">Binds 1 zinc ion per subunit.</text>
</comment>
<comment type="pathway">
    <text evidence="1">Carbohydrate biosynthesis; D-glycero-D-manno-heptose 7-phosphate biosynthesis; D-glycero-alpha-D-manno-heptose 7-phosphate and D-glycero-beta-D-manno-heptose 7-phosphate from sedoheptulose 7-phosphate: step 1/1.</text>
</comment>
<comment type="subunit">
    <text evidence="1">Homotetramer.</text>
</comment>
<comment type="subcellular location">
    <subcellularLocation>
        <location evidence="1">Cytoplasm</location>
    </subcellularLocation>
</comment>
<comment type="miscellaneous">
    <text evidence="1">The reaction produces a racemic mixture of D-glycero-alpha-D-manno-heptose 7-phosphate and D-glycero-beta-D-manno-heptose 7-phosphate.</text>
</comment>
<comment type="similarity">
    <text evidence="1">Belongs to the SIS family. GmhA subfamily.</text>
</comment>
<name>GMHA_HAEI8</name>
<dbReference type="EC" id="5.3.1.28" evidence="1"/>
<dbReference type="EMBL" id="CP000057">
    <property type="protein sequence ID" value="AAX88180.1"/>
    <property type="molecule type" value="Genomic_DNA"/>
</dbReference>
<dbReference type="RefSeq" id="WP_011272430.1">
    <property type="nucleotide sequence ID" value="NC_007146.2"/>
</dbReference>
<dbReference type="SMR" id="Q4QLB7"/>
<dbReference type="KEGG" id="hit:NTHI1350"/>
<dbReference type="HOGENOM" id="CLU_080999_4_0_6"/>
<dbReference type="UniPathway" id="UPA00041">
    <property type="reaction ID" value="UER00436"/>
</dbReference>
<dbReference type="Proteomes" id="UP000002525">
    <property type="component" value="Chromosome"/>
</dbReference>
<dbReference type="GO" id="GO:0005737">
    <property type="term" value="C:cytoplasm"/>
    <property type="evidence" value="ECO:0007669"/>
    <property type="project" value="UniProtKB-SubCell"/>
</dbReference>
<dbReference type="GO" id="GO:0097367">
    <property type="term" value="F:carbohydrate derivative binding"/>
    <property type="evidence" value="ECO:0007669"/>
    <property type="project" value="InterPro"/>
</dbReference>
<dbReference type="GO" id="GO:0008968">
    <property type="term" value="F:D-sedoheptulose 7-phosphate isomerase activity"/>
    <property type="evidence" value="ECO:0007669"/>
    <property type="project" value="UniProtKB-UniRule"/>
</dbReference>
<dbReference type="GO" id="GO:0008270">
    <property type="term" value="F:zinc ion binding"/>
    <property type="evidence" value="ECO:0007669"/>
    <property type="project" value="UniProtKB-UniRule"/>
</dbReference>
<dbReference type="GO" id="GO:0005975">
    <property type="term" value="P:carbohydrate metabolic process"/>
    <property type="evidence" value="ECO:0007669"/>
    <property type="project" value="UniProtKB-UniRule"/>
</dbReference>
<dbReference type="GO" id="GO:2001061">
    <property type="term" value="P:D-glycero-D-manno-heptose 7-phosphate biosynthetic process"/>
    <property type="evidence" value="ECO:0007669"/>
    <property type="project" value="UniProtKB-UniPathway"/>
</dbReference>
<dbReference type="CDD" id="cd05006">
    <property type="entry name" value="SIS_GmhA"/>
    <property type="match status" value="1"/>
</dbReference>
<dbReference type="Gene3D" id="3.40.50.10490">
    <property type="entry name" value="Glucose-6-phosphate isomerase like protein, domain 1"/>
    <property type="match status" value="1"/>
</dbReference>
<dbReference type="HAMAP" id="MF_00067">
    <property type="entry name" value="GmhA"/>
    <property type="match status" value="1"/>
</dbReference>
<dbReference type="InterPro" id="IPR035461">
    <property type="entry name" value="GmhA/DiaA"/>
</dbReference>
<dbReference type="InterPro" id="IPR004515">
    <property type="entry name" value="Phosphoheptose_Isoase"/>
</dbReference>
<dbReference type="InterPro" id="IPR001347">
    <property type="entry name" value="SIS_dom"/>
</dbReference>
<dbReference type="InterPro" id="IPR046348">
    <property type="entry name" value="SIS_dom_sf"/>
</dbReference>
<dbReference type="InterPro" id="IPR050099">
    <property type="entry name" value="SIS_GmhA/DiaA_subfam"/>
</dbReference>
<dbReference type="NCBIfam" id="TIGR00441">
    <property type="entry name" value="gmhA"/>
    <property type="match status" value="1"/>
</dbReference>
<dbReference type="NCBIfam" id="NF001628">
    <property type="entry name" value="PRK00414.1"/>
    <property type="match status" value="1"/>
</dbReference>
<dbReference type="PANTHER" id="PTHR30390:SF7">
    <property type="entry name" value="PHOSPHOHEPTOSE ISOMERASE"/>
    <property type="match status" value="1"/>
</dbReference>
<dbReference type="PANTHER" id="PTHR30390">
    <property type="entry name" value="SEDOHEPTULOSE 7-PHOSPHATE ISOMERASE / DNAA INITIATOR-ASSOCIATING FACTOR FOR REPLICATION INITIATION"/>
    <property type="match status" value="1"/>
</dbReference>
<dbReference type="Pfam" id="PF13580">
    <property type="entry name" value="SIS_2"/>
    <property type="match status" value="1"/>
</dbReference>
<dbReference type="SUPFAM" id="SSF53697">
    <property type="entry name" value="SIS domain"/>
    <property type="match status" value="1"/>
</dbReference>
<dbReference type="PROSITE" id="PS51464">
    <property type="entry name" value="SIS"/>
    <property type="match status" value="1"/>
</dbReference>
<keyword id="KW-0119">Carbohydrate metabolism</keyword>
<keyword id="KW-0963">Cytoplasm</keyword>
<keyword id="KW-0413">Isomerase</keyword>
<keyword id="KW-0479">Metal-binding</keyword>
<keyword id="KW-0862">Zinc</keyword>
<gene>
    <name evidence="1" type="primary">gmhA</name>
    <name type="ordered locus">NTHI1350</name>
</gene>
<protein>
    <recommendedName>
        <fullName evidence="1">Phosphoheptose isomerase</fullName>
        <ecNumber evidence="1">5.3.1.28</ecNumber>
    </recommendedName>
    <alternativeName>
        <fullName evidence="1">Sedoheptulose 7-phosphate isomerase</fullName>
    </alternativeName>
</protein>
<evidence type="ECO:0000255" key="1">
    <source>
        <dbReference type="HAMAP-Rule" id="MF_00067"/>
    </source>
</evidence>
<proteinExistence type="inferred from homology"/>
<reference key="1">
    <citation type="journal article" date="2005" name="J. Bacteriol.">
        <title>Genomic sequence of an otitis media isolate of nontypeable Haemophilus influenzae: comparative study with H. influenzae serotype d, strain KW20.</title>
        <authorList>
            <person name="Harrison A."/>
            <person name="Dyer D.W."/>
            <person name="Gillaspy A."/>
            <person name="Ray W.C."/>
            <person name="Mungur R."/>
            <person name="Carson M.B."/>
            <person name="Zhong H."/>
            <person name="Gipson J."/>
            <person name="Gipson M."/>
            <person name="Johnson L.S."/>
            <person name="Lewis L."/>
            <person name="Bakaletz L.O."/>
            <person name="Munson R.S. Jr."/>
        </authorList>
    </citation>
    <scope>NUCLEOTIDE SEQUENCE [LARGE SCALE GENOMIC DNA]</scope>
    <source>
        <strain>86-028NP</strain>
    </source>
</reference>
<accession>Q4QLB7</accession>
<sequence>MYLDQIKAELVEAQDVLNKFISDENNIKLIQEAALLISNSFKQGGKVLSCGNGGSHCDAMHFAEELTGRYRENRPGYPAIAISDASHLSCVSNDFGYEYVFSRYVEAVGQKGDVLFGLSTSGNSKNILNAIEAAKTKGMKVIAMTGKDGGKMAGLADVEIRVPHFRYADRIQEIHIKVIHILMMLIEFEMAKQA</sequence>